<feature type="signal peptide" evidence="1">
    <location>
        <begin position="1"/>
        <end position="19"/>
    </location>
</feature>
<feature type="chain" id="PRO_0000014971" description="Thy-1 membrane glycoprotein">
    <location>
        <begin position="20"/>
        <end position="129"/>
    </location>
</feature>
<feature type="propeptide" id="PRO_0000014972" description="Removed in mature form" evidence="1">
    <location>
        <begin position="130"/>
        <end position="160"/>
    </location>
</feature>
<feature type="domain" description="Ig-like V-type" evidence="3">
    <location>
        <begin position="20"/>
        <end position="120"/>
    </location>
</feature>
<feature type="modified residue" description="Pyrrolidone carboxylic acid" evidence="2">
    <location>
        <position position="20"/>
    </location>
</feature>
<feature type="lipid moiety-binding region" description="GPI-anchor amidated cysteine" evidence="1">
    <location>
        <position position="129"/>
    </location>
</feature>
<feature type="glycosylation site" description="N-linked (GlcNAc...) asparagine" evidence="3">
    <location>
        <position position="42"/>
    </location>
</feature>
<feature type="glycosylation site" description="N-linked (GlcNAc...) asparagine" evidence="3">
    <location>
        <position position="78"/>
    </location>
</feature>
<feature type="glycosylation site" description="N-linked (GlcNAc...) asparagine" evidence="3">
    <location>
        <position position="118"/>
    </location>
</feature>
<feature type="glycosylation site" description="N-linked (GlcNAc...) asparagine" evidence="3">
    <location>
        <position position="138"/>
    </location>
</feature>
<feature type="disulfide bond" evidence="1">
    <location>
        <begin position="28"/>
        <end position="129"/>
    </location>
</feature>
<feature type="disulfide bond" evidence="1">
    <location>
        <begin position="38"/>
        <end position="103"/>
    </location>
</feature>
<feature type="sequence conflict" description="In Ref. 1; AA sequence." evidence="5" ref="1">
    <original>R</original>
    <variation>F</variation>
    <location>
        <position position="76"/>
    </location>
</feature>
<feature type="sequence conflict" description="In Ref. 1; AA sequence." evidence="5" ref="1">
    <original>H</original>
    <variation>I</variation>
    <location>
        <position position="82"/>
    </location>
</feature>
<evidence type="ECO:0000250" key="1"/>
<evidence type="ECO:0000250" key="2">
    <source>
        <dbReference type="UniProtKB" id="P01831"/>
    </source>
</evidence>
<evidence type="ECO:0000255" key="3"/>
<evidence type="ECO:0000269" key="4">
    <source>
    </source>
</evidence>
<evidence type="ECO:0000305" key="5"/>
<gene>
    <name type="primary">THY1</name>
</gene>
<keyword id="KW-1003">Cell membrane</keyword>
<keyword id="KW-0903">Direct protein sequencing</keyword>
<keyword id="KW-1015">Disulfide bond</keyword>
<keyword id="KW-0325">Glycoprotein</keyword>
<keyword id="KW-0336">GPI-anchor</keyword>
<keyword id="KW-0393">Immunoglobulin domain</keyword>
<keyword id="KW-0449">Lipoprotein</keyword>
<keyword id="KW-0472">Membrane</keyword>
<keyword id="KW-0873">Pyrrolidone carboxylic acid</keyword>
<keyword id="KW-1185">Reference proteome</keyword>
<keyword id="KW-0732">Signal</keyword>
<dbReference type="EMBL" id="S47368">
    <property type="protein sequence ID" value="AAA11889.1"/>
    <property type="molecule type" value="mRNA"/>
</dbReference>
<dbReference type="EMBL" id="L14924">
    <property type="protein sequence ID" value="AAC42216.1"/>
    <property type="molecule type" value="mRNA"/>
</dbReference>
<dbReference type="PIR" id="A48975">
    <property type="entry name" value="A48975"/>
</dbReference>
<dbReference type="SMR" id="Q07212"/>
<dbReference type="BioGRID" id="675315">
    <property type="interactions" value="1"/>
</dbReference>
<dbReference type="FunCoup" id="Q07212">
    <property type="interactions" value="686"/>
</dbReference>
<dbReference type="IntAct" id="Q07212">
    <property type="interactions" value="1"/>
</dbReference>
<dbReference type="STRING" id="9031.ENSGALP00000040036"/>
<dbReference type="GlyCosmos" id="Q07212">
    <property type="glycosylation" value="4 sites, No reported glycans"/>
</dbReference>
<dbReference type="GlyGen" id="Q07212">
    <property type="glycosylation" value="4 sites"/>
</dbReference>
<dbReference type="PaxDb" id="9031-ENSGALP00000040036"/>
<dbReference type="VEuPathDB" id="HostDB:geneid_378897"/>
<dbReference type="eggNOG" id="ENOG502S18P">
    <property type="taxonomic scope" value="Eukaryota"/>
</dbReference>
<dbReference type="InParanoid" id="Q07212"/>
<dbReference type="OrthoDB" id="8396829at2759"/>
<dbReference type="PhylomeDB" id="Q07212"/>
<dbReference type="Proteomes" id="UP000000539">
    <property type="component" value="Unassembled WGS sequence"/>
</dbReference>
<dbReference type="GO" id="GO:0030425">
    <property type="term" value="C:dendrite"/>
    <property type="evidence" value="ECO:0000318"/>
    <property type="project" value="GO_Central"/>
</dbReference>
<dbReference type="GO" id="GO:0009897">
    <property type="term" value="C:external side of plasma membrane"/>
    <property type="evidence" value="ECO:0000250"/>
    <property type="project" value="UniProtKB"/>
</dbReference>
<dbReference type="GO" id="GO:0030426">
    <property type="term" value="C:growth cone"/>
    <property type="evidence" value="ECO:0000250"/>
    <property type="project" value="UniProtKB"/>
</dbReference>
<dbReference type="GO" id="GO:0045121">
    <property type="term" value="C:membrane raft"/>
    <property type="evidence" value="ECO:0000318"/>
    <property type="project" value="GO_Central"/>
</dbReference>
<dbReference type="GO" id="GO:0005886">
    <property type="term" value="C:plasma membrane"/>
    <property type="evidence" value="ECO:0000250"/>
    <property type="project" value="UniProtKB"/>
</dbReference>
<dbReference type="GO" id="GO:0034235">
    <property type="term" value="F:GPI anchor binding"/>
    <property type="evidence" value="ECO:0000250"/>
    <property type="project" value="UniProtKB"/>
</dbReference>
<dbReference type="GO" id="GO:0005096">
    <property type="term" value="F:GTPase activator activity"/>
    <property type="evidence" value="ECO:0000250"/>
    <property type="project" value="UniProtKB"/>
</dbReference>
<dbReference type="GO" id="GO:0005178">
    <property type="term" value="F:integrin binding"/>
    <property type="evidence" value="ECO:0007669"/>
    <property type="project" value="InterPro"/>
</dbReference>
<dbReference type="GO" id="GO:0001525">
    <property type="term" value="P:angiogenesis"/>
    <property type="evidence" value="ECO:0000250"/>
    <property type="project" value="UniProtKB"/>
</dbReference>
<dbReference type="GO" id="GO:0098609">
    <property type="term" value="P:cell-cell adhesion"/>
    <property type="evidence" value="ECO:0000250"/>
    <property type="project" value="UniProtKB"/>
</dbReference>
<dbReference type="GO" id="GO:0007010">
    <property type="term" value="P:cytoskeleton organization"/>
    <property type="evidence" value="ECO:0000250"/>
    <property type="project" value="UniProtKB"/>
</dbReference>
<dbReference type="GO" id="GO:0048041">
    <property type="term" value="P:focal adhesion assembly"/>
    <property type="evidence" value="ECO:0000250"/>
    <property type="project" value="UniProtKB"/>
</dbReference>
<dbReference type="GO" id="GO:0007229">
    <property type="term" value="P:integrin-mediated signaling pathway"/>
    <property type="evidence" value="ECO:0000318"/>
    <property type="project" value="GO_Central"/>
</dbReference>
<dbReference type="GO" id="GO:0050771">
    <property type="term" value="P:negative regulation of axonogenesis"/>
    <property type="evidence" value="ECO:0000250"/>
    <property type="project" value="UniProtKB"/>
</dbReference>
<dbReference type="GO" id="GO:0030336">
    <property type="term" value="P:negative regulation of cell migration"/>
    <property type="evidence" value="ECO:0000250"/>
    <property type="project" value="UniProtKB"/>
</dbReference>
<dbReference type="GO" id="GO:0006469">
    <property type="term" value="P:negative regulation of protein kinase activity"/>
    <property type="evidence" value="ECO:0000250"/>
    <property type="project" value="UniProtKB"/>
</dbReference>
<dbReference type="GO" id="GO:0050860">
    <property type="term" value="P:negative regulation of T cell receptor signaling pathway"/>
    <property type="evidence" value="ECO:0000250"/>
    <property type="project" value="UniProtKB"/>
</dbReference>
<dbReference type="GO" id="GO:0051894">
    <property type="term" value="P:positive regulation of focal adhesion assembly"/>
    <property type="evidence" value="ECO:0000318"/>
    <property type="project" value="GO_Central"/>
</dbReference>
<dbReference type="GO" id="GO:0043547">
    <property type="term" value="P:positive regulation of GTPase activity"/>
    <property type="evidence" value="ECO:0000250"/>
    <property type="project" value="UniProtKB"/>
</dbReference>
<dbReference type="GO" id="GO:0051281">
    <property type="term" value="P:positive regulation of release of sequestered calcium ion into cytosol"/>
    <property type="evidence" value="ECO:0000250"/>
    <property type="project" value="UniProtKB"/>
</dbReference>
<dbReference type="GO" id="GO:0050870">
    <property type="term" value="P:positive regulation of T cell activation"/>
    <property type="evidence" value="ECO:0000250"/>
    <property type="project" value="UniProtKB"/>
</dbReference>
<dbReference type="GO" id="GO:0046549">
    <property type="term" value="P:retinal cone cell development"/>
    <property type="evidence" value="ECO:0000250"/>
    <property type="project" value="UniProtKB"/>
</dbReference>
<dbReference type="GO" id="GO:0050852">
    <property type="term" value="P:T cell receptor signaling pathway"/>
    <property type="evidence" value="ECO:0000250"/>
    <property type="project" value="UniProtKB"/>
</dbReference>
<dbReference type="FunFam" id="2.60.40.10:FF:001828">
    <property type="entry name" value="Thy-1 membrane glycoprotein"/>
    <property type="match status" value="1"/>
</dbReference>
<dbReference type="Gene3D" id="2.60.40.10">
    <property type="entry name" value="Immunoglobulins"/>
    <property type="match status" value="1"/>
</dbReference>
<dbReference type="InterPro" id="IPR036179">
    <property type="entry name" value="Ig-like_dom_sf"/>
</dbReference>
<dbReference type="InterPro" id="IPR013783">
    <property type="entry name" value="Ig-like_fold"/>
</dbReference>
<dbReference type="InterPro" id="IPR013106">
    <property type="entry name" value="Ig_V-set"/>
</dbReference>
<dbReference type="InterPro" id="IPR033292">
    <property type="entry name" value="THY1"/>
</dbReference>
<dbReference type="PANTHER" id="PTHR19226">
    <property type="entry name" value="THY-1 MEMBRANE GLYCOPROTEIN"/>
    <property type="match status" value="1"/>
</dbReference>
<dbReference type="PANTHER" id="PTHR19226:SF2">
    <property type="entry name" value="THY-1 MEMBRANE GLYCOPROTEIN"/>
    <property type="match status" value="1"/>
</dbReference>
<dbReference type="Pfam" id="PF07686">
    <property type="entry name" value="V-set"/>
    <property type="match status" value="1"/>
</dbReference>
<dbReference type="SMART" id="SM00406">
    <property type="entry name" value="IGv"/>
    <property type="match status" value="1"/>
</dbReference>
<dbReference type="SUPFAM" id="SSF48726">
    <property type="entry name" value="Immunoglobulin"/>
    <property type="match status" value="1"/>
</dbReference>
<reference key="1">
    <citation type="journal article" date="1992" name="Brain Res. Mol. Brain Res.">
        <title>Molecular cloning and primary structure of the avian Thy-1 glycoprotein.</title>
        <authorList>
            <person name="Dowsing B.J."/>
            <person name="Gooley A.A."/>
            <person name="Gunning P."/>
            <person name="Cunningham A."/>
            <person name="Jeffrey P.L."/>
        </authorList>
    </citation>
    <scope>NUCLEOTIDE SEQUENCE [MRNA]</scope>
    <scope>PROTEIN SEQUENCE OF 43-55; 59-79 AND 81-101</scope>
    <source>
        <strain>White leghorn</strain>
        <tissue>Brain</tissue>
    </source>
</reference>
<comment type="function">
    <text>May play a role in cell-cell or cell-ligand interactions during synaptogenesis and other events in the brain.</text>
</comment>
<comment type="subcellular location">
    <subcellularLocation>
        <location evidence="1">Cell membrane</location>
        <topology evidence="1">Lipid-anchor</topology>
        <topology evidence="1">GPI-anchor</topology>
    </subcellularLocation>
</comment>
<comment type="tissue specificity">
    <text>Forebrain, cerebellum and tectum.</text>
</comment>
<comment type="developmental stage">
    <text>It is detected at embryonic day 4 (4 dpc) in forebrain and tectum. There is an increase in levels between 16 dpc and the first few days post-hatch. During 19 dpc to hatch a rapid reduction in the levels is seen with a general increase in expression in adulthood.</text>
</comment>
<comment type="PTM">
    <text evidence="4">The N-terminus is blocked.</text>
</comment>
<accession>Q07212</accession>
<protein>
    <recommendedName>
        <fullName>Thy-1 membrane glycoprotein</fullName>
    </recommendedName>
    <alternativeName>
        <fullName>Thy-1 antigen</fullName>
    </alternativeName>
</protein>
<proteinExistence type="evidence at protein level"/>
<sequence length="160" mass="18165">MNPTVSIAVILTVLQAAHCQMIRDLSACLLGQSLRVDCRYENKTSNPLTYEFSLTRQQKHIIQSTISVSENVYRNRANVTMHKNLVCLYLHSFTTSDEGVYMCELKATNDYTGNQIKNITVIKDKLEKCVRLSLLIQNTSWLLLLLLSLPLLQAVDFVSL</sequence>
<name>THY1_CHICK</name>
<organism>
    <name type="scientific">Gallus gallus</name>
    <name type="common">Chicken</name>
    <dbReference type="NCBI Taxonomy" id="9031"/>
    <lineage>
        <taxon>Eukaryota</taxon>
        <taxon>Metazoa</taxon>
        <taxon>Chordata</taxon>
        <taxon>Craniata</taxon>
        <taxon>Vertebrata</taxon>
        <taxon>Euteleostomi</taxon>
        <taxon>Archelosauria</taxon>
        <taxon>Archosauria</taxon>
        <taxon>Dinosauria</taxon>
        <taxon>Saurischia</taxon>
        <taxon>Theropoda</taxon>
        <taxon>Coelurosauria</taxon>
        <taxon>Aves</taxon>
        <taxon>Neognathae</taxon>
        <taxon>Galloanserae</taxon>
        <taxon>Galliformes</taxon>
        <taxon>Phasianidae</taxon>
        <taxon>Phasianinae</taxon>
        <taxon>Gallus</taxon>
    </lineage>
</organism>